<dbReference type="EMBL" id="CH236959">
    <property type="protein sequence ID" value="EAL23794.1"/>
    <property type="molecule type" value="Genomic_DNA"/>
</dbReference>
<dbReference type="EMBL" id="AC004853">
    <property type="status" value="NOT_ANNOTATED_CDS"/>
    <property type="molecule type" value="Genomic_DNA"/>
</dbReference>
<dbReference type="EMBL" id="BC136813">
    <property type="protein sequence ID" value="AAI36814.1"/>
    <property type="molecule type" value="mRNA"/>
</dbReference>
<dbReference type="EMBL" id="BK004214">
    <property type="protein sequence ID" value="DAA04612.1"/>
    <property type="molecule type" value="Genomic_DNA"/>
</dbReference>
<dbReference type="CCDS" id="CCDS43666.1"/>
<dbReference type="RefSeq" id="NP_001004685.1">
    <property type="nucleotide sequence ID" value="NM_001004685.1"/>
</dbReference>
<dbReference type="SMR" id="O95006"/>
<dbReference type="BioGRID" id="126444">
    <property type="interactions" value="2"/>
</dbReference>
<dbReference type="FunCoup" id="O95006">
    <property type="interactions" value="484"/>
</dbReference>
<dbReference type="STRING" id="9606.ENSP00000386222"/>
<dbReference type="GlyCosmos" id="O95006">
    <property type="glycosylation" value="1 site, No reported glycans"/>
</dbReference>
<dbReference type="GlyGen" id="O95006">
    <property type="glycosylation" value="1 site"/>
</dbReference>
<dbReference type="iPTMnet" id="O95006"/>
<dbReference type="PhosphoSitePlus" id="O95006"/>
<dbReference type="BioMuta" id="OR2F2"/>
<dbReference type="PaxDb" id="9606-ENSP00000386222"/>
<dbReference type="ProteomicsDB" id="50623"/>
<dbReference type="Antibodypedia" id="56184">
    <property type="antibodies" value="96 antibodies from 21 providers"/>
</dbReference>
<dbReference type="DNASU" id="135948"/>
<dbReference type="Ensembl" id="ENST00000408955.3">
    <property type="protein sequence ID" value="ENSP00000386222.2"/>
    <property type="gene ID" value="ENSG00000221910.3"/>
</dbReference>
<dbReference type="Ensembl" id="ENST00000643492.1">
    <property type="protein sequence ID" value="ENSP00000495472.1"/>
    <property type="gene ID" value="ENSG00000284965.1"/>
</dbReference>
<dbReference type="GeneID" id="135948"/>
<dbReference type="KEGG" id="hsa:135948"/>
<dbReference type="MANE-Select" id="ENST00000408955.3">
    <property type="protein sequence ID" value="ENSP00000386222.2"/>
    <property type="RefSeq nucleotide sequence ID" value="NM_001004685.1"/>
    <property type="RefSeq protein sequence ID" value="NP_001004685.1"/>
</dbReference>
<dbReference type="UCSC" id="uc011ktv.3">
    <property type="organism name" value="human"/>
</dbReference>
<dbReference type="AGR" id="HGNC:8247"/>
<dbReference type="CTD" id="135948"/>
<dbReference type="GeneCards" id="OR2F2"/>
<dbReference type="HGNC" id="HGNC:8247">
    <property type="gene designation" value="OR2F2"/>
</dbReference>
<dbReference type="HPA" id="ENSG00000221910">
    <property type="expression patterns" value="Not detected"/>
</dbReference>
<dbReference type="neXtProt" id="NX_O95006"/>
<dbReference type="PharmGKB" id="PA32156"/>
<dbReference type="VEuPathDB" id="HostDB:ENSG00000221910"/>
<dbReference type="eggNOG" id="ENOG502SKV6">
    <property type="taxonomic scope" value="Eukaryota"/>
</dbReference>
<dbReference type="GeneTree" id="ENSGT01130000278310"/>
<dbReference type="HOGENOM" id="CLU_012526_1_0_1"/>
<dbReference type="InParanoid" id="O95006"/>
<dbReference type="OMA" id="AIMHVGL"/>
<dbReference type="OrthoDB" id="9007674at2759"/>
<dbReference type="PAN-GO" id="O95006">
    <property type="GO annotations" value="0 GO annotations based on evolutionary models"/>
</dbReference>
<dbReference type="PhylomeDB" id="O95006"/>
<dbReference type="TreeFam" id="TF337251"/>
<dbReference type="PathwayCommons" id="O95006"/>
<dbReference type="Reactome" id="R-HSA-9752946">
    <property type="pathway name" value="Expression and translocation of olfactory receptors"/>
</dbReference>
<dbReference type="BioGRID-ORCS" id="135948">
    <property type="hits" value="13 hits in 740 CRISPR screens"/>
</dbReference>
<dbReference type="GeneWiki" id="OR2F2"/>
<dbReference type="GenomeRNAi" id="135948"/>
<dbReference type="Pharos" id="O95006">
    <property type="development level" value="Tdark"/>
</dbReference>
<dbReference type="PRO" id="PR:O95006"/>
<dbReference type="Proteomes" id="UP000005640">
    <property type="component" value="Chromosome 7"/>
</dbReference>
<dbReference type="RNAct" id="O95006">
    <property type="molecule type" value="protein"/>
</dbReference>
<dbReference type="Bgee" id="ENSG00000221910">
    <property type="expression patterns" value="Expressed in ganglionic eminence"/>
</dbReference>
<dbReference type="GO" id="GO:0005886">
    <property type="term" value="C:plasma membrane"/>
    <property type="evidence" value="ECO:0000318"/>
    <property type="project" value="GO_Central"/>
</dbReference>
<dbReference type="GO" id="GO:0004930">
    <property type="term" value="F:G protein-coupled receptor activity"/>
    <property type="evidence" value="ECO:0007669"/>
    <property type="project" value="UniProtKB-KW"/>
</dbReference>
<dbReference type="GO" id="GO:0004984">
    <property type="term" value="F:olfactory receptor activity"/>
    <property type="evidence" value="ECO:0000318"/>
    <property type="project" value="GO_Central"/>
</dbReference>
<dbReference type="GO" id="GO:0050911">
    <property type="term" value="P:detection of chemical stimulus involved in sensory perception of smell"/>
    <property type="evidence" value="ECO:0000318"/>
    <property type="project" value="GO_Central"/>
</dbReference>
<dbReference type="CDD" id="cd15429">
    <property type="entry name" value="7tmA_OR2F-like"/>
    <property type="match status" value="1"/>
</dbReference>
<dbReference type="FunFam" id="1.10.1220.70:FF:000001">
    <property type="entry name" value="Olfactory receptor"/>
    <property type="match status" value="1"/>
</dbReference>
<dbReference type="FunFam" id="1.20.1070.10:FF:000005">
    <property type="entry name" value="Olfactory receptor"/>
    <property type="match status" value="1"/>
</dbReference>
<dbReference type="Gene3D" id="1.20.1070.10">
    <property type="entry name" value="Rhodopsin 7-helix transmembrane proteins"/>
    <property type="match status" value="1"/>
</dbReference>
<dbReference type="InterPro" id="IPR000276">
    <property type="entry name" value="GPCR_Rhodpsn"/>
</dbReference>
<dbReference type="InterPro" id="IPR017452">
    <property type="entry name" value="GPCR_Rhodpsn_7TM"/>
</dbReference>
<dbReference type="InterPro" id="IPR000725">
    <property type="entry name" value="Olfact_rcpt"/>
</dbReference>
<dbReference type="PANTHER" id="PTHR26453">
    <property type="entry name" value="OLFACTORY RECEPTOR"/>
    <property type="match status" value="1"/>
</dbReference>
<dbReference type="Pfam" id="PF13853">
    <property type="entry name" value="7tm_4"/>
    <property type="match status" value="1"/>
</dbReference>
<dbReference type="PRINTS" id="PR00237">
    <property type="entry name" value="GPCRRHODOPSN"/>
</dbReference>
<dbReference type="PRINTS" id="PR00245">
    <property type="entry name" value="OLFACTORYR"/>
</dbReference>
<dbReference type="SUPFAM" id="SSF81321">
    <property type="entry name" value="Family A G protein-coupled receptor-like"/>
    <property type="match status" value="1"/>
</dbReference>
<dbReference type="PROSITE" id="PS00237">
    <property type="entry name" value="G_PROTEIN_RECEP_F1_1"/>
    <property type="match status" value="1"/>
</dbReference>
<dbReference type="PROSITE" id="PS50262">
    <property type="entry name" value="G_PROTEIN_RECEP_F1_2"/>
    <property type="match status" value="1"/>
</dbReference>
<comment type="function">
    <text evidence="3">Odorant receptor.</text>
</comment>
<comment type="subcellular location">
    <subcellularLocation>
        <location>Cell membrane</location>
        <topology>Multi-pass membrane protein</topology>
    </subcellularLocation>
</comment>
<comment type="similarity">
    <text evidence="2">Belongs to the G-protein coupled receptor 1 family.</text>
</comment>
<comment type="online information" name="Human Olfactory Receptor Data Exploratorium (HORDE)">
    <link uri="http://genome.weizmann.ac.il/horde/card/index/symbol:OR2F2"/>
</comment>
<reference key="1">
    <citation type="journal article" date="2003" name="Science">
        <title>Human chromosome 7: DNA sequence and biology.</title>
        <authorList>
            <person name="Scherer S.W."/>
            <person name="Cheung J."/>
            <person name="MacDonald J.R."/>
            <person name="Osborne L.R."/>
            <person name="Nakabayashi K."/>
            <person name="Herbrick J.-A."/>
            <person name="Carson A.R."/>
            <person name="Parker-Katiraee L."/>
            <person name="Skaug J."/>
            <person name="Khaja R."/>
            <person name="Zhang J."/>
            <person name="Hudek A.K."/>
            <person name="Li M."/>
            <person name="Haddad M."/>
            <person name="Duggan G.E."/>
            <person name="Fernandez B.A."/>
            <person name="Kanematsu E."/>
            <person name="Gentles S."/>
            <person name="Christopoulos C.C."/>
            <person name="Choufani S."/>
            <person name="Kwasnicka D."/>
            <person name="Zheng X.H."/>
            <person name="Lai Z."/>
            <person name="Nusskern D.R."/>
            <person name="Zhang Q."/>
            <person name="Gu Z."/>
            <person name="Lu F."/>
            <person name="Zeesman S."/>
            <person name="Nowaczyk M.J."/>
            <person name="Teshima I."/>
            <person name="Chitayat D."/>
            <person name="Shuman C."/>
            <person name="Weksberg R."/>
            <person name="Zackai E.H."/>
            <person name="Grebe T.A."/>
            <person name="Cox S.R."/>
            <person name="Kirkpatrick S.J."/>
            <person name="Rahman N."/>
            <person name="Friedman J.M."/>
            <person name="Heng H.H.Q."/>
            <person name="Pelicci P.G."/>
            <person name="Lo-Coco F."/>
            <person name="Belloni E."/>
            <person name="Shaffer L.G."/>
            <person name="Pober B."/>
            <person name="Morton C.C."/>
            <person name="Gusella J.F."/>
            <person name="Bruns G.A.P."/>
            <person name="Korf B.R."/>
            <person name="Quade B.J."/>
            <person name="Ligon A.H."/>
            <person name="Ferguson H."/>
            <person name="Higgins A.W."/>
            <person name="Leach N.T."/>
            <person name="Herrick S.R."/>
            <person name="Lemyre E."/>
            <person name="Farra C.G."/>
            <person name="Kim H.-G."/>
            <person name="Summers A.M."/>
            <person name="Gripp K.W."/>
            <person name="Roberts W."/>
            <person name="Szatmari P."/>
            <person name="Winsor E.J.T."/>
            <person name="Grzeschik K.-H."/>
            <person name="Teebi A."/>
            <person name="Minassian B.A."/>
            <person name="Kere J."/>
            <person name="Armengol L."/>
            <person name="Pujana M.A."/>
            <person name="Estivill X."/>
            <person name="Wilson M.D."/>
            <person name="Koop B.F."/>
            <person name="Tosi S."/>
            <person name="Moore G.E."/>
            <person name="Boright A.P."/>
            <person name="Zlotorynski E."/>
            <person name="Kerem B."/>
            <person name="Kroisel P.M."/>
            <person name="Petek E."/>
            <person name="Oscier D.G."/>
            <person name="Mould S.J."/>
            <person name="Doehner H."/>
            <person name="Doehner K."/>
            <person name="Rommens J.M."/>
            <person name="Vincent J.B."/>
            <person name="Venter J.C."/>
            <person name="Li P.W."/>
            <person name="Mural R.J."/>
            <person name="Adams M.D."/>
            <person name="Tsui L.-C."/>
        </authorList>
    </citation>
    <scope>NUCLEOTIDE SEQUENCE [LARGE SCALE GENOMIC DNA]</scope>
</reference>
<reference key="2">
    <citation type="journal article" date="2003" name="Nature">
        <title>The DNA sequence of human chromosome 7.</title>
        <authorList>
            <person name="Hillier L.W."/>
            <person name="Fulton R.S."/>
            <person name="Fulton L.A."/>
            <person name="Graves T.A."/>
            <person name="Pepin K.H."/>
            <person name="Wagner-McPherson C."/>
            <person name="Layman D."/>
            <person name="Maas J."/>
            <person name="Jaeger S."/>
            <person name="Walker R."/>
            <person name="Wylie K."/>
            <person name="Sekhon M."/>
            <person name="Becker M.C."/>
            <person name="O'Laughlin M.D."/>
            <person name="Schaller M.E."/>
            <person name="Fewell G.A."/>
            <person name="Delehaunty K.D."/>
            <person name="Miner T.L."/>
            <person name="Nash W.E."/>
            <person name="Cordes M."/>
            <person name="Du H."/>
            <person name="Sun H."/>
            <person name="Edwards J."/>
            <person name="Bradshaw-Cordum H."/>
            <person name="Ali J."/>
            <person name="Andrews S."/>
            <person name="Isak A."/>
            <person name="Vanbrunt A."/>
            <person name="Nguyen C."/>
            <person name="Du F."/>
            <person name="Lamar B."/>
            <person name="Courtney L."/>
            <person name="Kalicki J."/>
            <person name="Ozersky P."/>
            <person name="Bielicki L."/>
            <person name="Scott K."/>
            <person name="Holmes A."/>
            <person name="Harkins R."/>
            <person name="Harris A."/>
            <person name="Strong C.M."/>
            <person name="Hou S."/>
            <person name="Tomlinson C."/>
            <person name="Dauphin-Kohlberg S."/>
            <person name="Kozlowicz-Reilly A."/>
            <person name="Leonard S."/>
            <person name="Rohlfing T."/>
            <person name="Rock S.M."/>
            <person name="Tin-Wollam A.-M."/>
            <person name="Abbott A."/>
            <person name="Minx P."/>
            <person name="Maupin R."/>
            <person name="Strowmatt C."/>
            <person name="Latreille P."/>
            <person name="Miller N."/>
            <person name="Johnson D."/>
            <person name="Murray J."/>
            <person name="Woessner J.P."/>
            <person name="Wendl M.C."/>
            <person name="Yang S.-P."/>
            <person name="Schultz B.R."/>
            <person name="Wallis J.W."/>
            <person name="Spieth J."/>
            <person name="Bieri T.A."/>
            <person name="Nelson J.O."/>
            <person name="Berkowicz N."/>
            <person name="Wohldmann P.E."/>
            <person name="Cook L.L."/>
            <person name="Hickenbotham M.T."/>
            <person name="Eldred J."/>
            <person name="Williams D."/>
            <person name="Bedell J.A."/>
            <person name="Mardis E.R."/>
            <person name="Clifton S.W."/>
            <person name="Chissoe S.L."/>
            <person name="Marra M.A."/>
            <person name="Raymond C."/>
            <person name="Haugen E."/>
            <person name="Gillett W."/>
            <person name="Zhou Y."/>
            <person name="James R."/>
            <person name="Phelps K."/>
            <person name="Iadanoto S."/>
            <person name="Bubb K."/>
            <person name="Simms E."/>
            <person name="Levy R."/>
            <person name="Clendenning J."/>
            <person name="Kaul R."/>
            <person name="Kent W.J."/>
            <person name="Furey T.S."/>
            <person name="Baertsch R.A."/>
            <person name="Brent M.R."/>
            <person name="Keibler E."/>
            <person name="Flicek P."/>
            <person name="Bork P."/>
            <person name="Suyama M."/>
            <person name="Bailey J.A."/>
            <person name="Portnoy M.E."/>
            <person name="Torrents D."/>
            <person name="Chinwalla A.T."/>
            <person name="Gish W.R."/>
            <person name="Eddy S.R."/>
            <person name="McPherson J.D."/>
            <person name="Olson M.V."/>
            <person name="Eichler E.E."/>
            <person name="Green E.D."/>
            <person name="Waterston R.H."/>
            <person name="Wilson R.K."/>
        </authorList>
    </citation>
    <scope>NUCLEOTIDE SEQUENCE [LARGE SCALE GENOMIC DNA]</scope>
</reference>
<reference key="3">
    <citation type="journal article" date="2004" name="Genome Res.">
        <title>The status, quality, and expansion of the NIH full-length cDNA project: the Mammalian Gene Collection (MGC).</title>
        <authorList>
            <consortium name="The MGC Project Team"/>
        </authorList>
    </citation>
    <scope>NUCLEOTIDE SEQUENCE [LARGE SCALE MRNA]</scope>
</reference>
<reference key="4">
    <citation type="journal article" date="2004" name="Proc. Natl. Acad. Sci. U.S.A.">
        <title>The human olfactory receptor gene family.</title>
        <authorList>
            <person name="Malnic B."/>
            <person name="Godfrey P.A."/>
            <person name="Buck L.B."/>
        </authorList>
    </citation>
    <scope>IDENTIFICATION</scope>
</reference>
<reference key="5">
    <citation type="journal article" date="2004" name="Proc. Natl. Acad. Sci. U.S.A.">
        <authorList>
            <person name="Malnic B."/>
            <person name="Godfrey P.A."/>
            <person name="Buck L.B."/>
        </authorList>
    </citation>
    <scope>ERRATUM OF PUBMED:14983052</scope>
</reference>
<keyword id="KW-1003">Cell membrane</keyword>
<keyword id="KW-1015">Disulfide bond</keyword>
<keyword id="KW-0297">G-protein coupled receptor</keyword>
<keyword id="KW-0325">Glycoprotein</keyword>
<keyword id="KW-0472">Membrane</keyword>
<keyword id="KW-0552">Olfaction</keyword>
<keyword id="KW-0675">Receptor</keyword>
<keyword id="KW-1185">Reference proteome</keyword>
<keyword id="KW-0716">Sensory transduction</keyword>
<keyword id="KW-0807">Transducer</keyword>
<keyword id="KW-0812">Transmembrane</keyword>
<keyword id="KW-1133">Transmembrane helix</keyword>
<name>OR2F2_HUMAN</name>
<evidence type="ECO:0000255" key="1"/>
<evidence type="ECO:0000255" key="2">
    <source>
        <dbReference type="PROSITE-ProRule" id="PRU00521"/>
    </source>
</evidence>
<evidence type="ECO:0000305" key="3"/>
<feature type="chain" id="PRO_0000150470" description="Olfactory receptor 2F2">
    <location>
        <begin position="1"/>
        <end position="317"/>
    </location>
</feature>
<feature type="topological domain" description="Extracellular" evidence="1">
    <location>
        <begin position="1"/>
        <end position="25"/>
    </location>
</feature>
<feature type="transmembrane region" description="Helical; Name=1" evidence="1">
    <location>
        <begin position="26"/>
        <end position="49"/>
    </location>
</feature>
<feature type="topological domain" description="Cytoplasmic" evidence="1">
    <location>
        <begin position="50"/>
        <end position="57"/>
    </location>
</feature>
<feature type="transmembrane region" description="Helical; Name=2" evidence="1">
    <location>
        <begin position="58"/>
        <end position="79"/>
    </location>
</feature>
<feature type="topological domain" description="Extracellular" evidence="1">
    <location>
        <begin position="80"/>
        <end position="100"/>
    </location>
</feature>
<feature type="transmembrane region" description="Helical; Name=3" evidence="1">
    <location>
        <begin position="101"/>
        <end position="120"/>
    </location>
</feature>
<feature type="topological domain" description="Cytoplasmic" evidence="1">
    <location>
        <begin position="121"/>
        <end position="139"/>
    </location>
</feature>
<feature type="transmembrane region" description="Helical; Name=4" evidence="1">
    <location>
        <begin position="140"/>
        <end position="158"/>
    </location>
</feature>
<feature type="topological domain" description="Extracellular" evidence="1">
    <location>
        <begin position="159"/>
        <end position="195"/>
    </location>
</feature>
<feature type="transmembrane region" description="Helical; Name=5" evidence="1">
    <location>
        <begin position="196"/>
        <end position="219"/>
    </location>
</feature>
<feature type="topological domain" description="Cytoplasmic" evidence="1">
    <location>
        <begin position="220"/>
        <end position="236"/>
    </location>
</feature>
<feature type="transmembrane region" description="Helical; Name=6" evidence="1">
    <location>
        <begin position="237"/>
        <end position="259"/>
    </location>
</feature>
<feature type="topological domain" description="Extracellular" evidence="1">
    <location>
        <begin position="260"/>
        <end position="272"/>
    </location>
</feature>
<feature type="transmembrane region" description="Helical; Name=7" evidence="1">
    <location>
        <begin position="273"/>
        <end position="292"/>
    </location>
</feature>
<feature type="topological domain" description="Cytoplasmic" evidence="1">
    <location>
        <begin position="293"/>
        <end position="317"/>
    </location>
</feature>
<feature type="glycosylation site" description="N-linked (GlcNAc...) asparagine" evidence="1">
    <location>
        <position position="5"/>
    </location>
</feature>
<feature type="disulfide bond" evidence="2">
    <location>
        <begin position="97"/>
        <end position="189"/>
    </location>
</feature>
<feature type="sequence variant" id="VAR_022048" description="In dbSNP:rs2240359.">
    <original>A</original>
    <variation>V</variation>
    <location>
        <position position="98"/>
    </location>
</feature>
<feature type="sequence variant" id="VAR_034172" description="In dbSNP:rs13229174.">
    <original>T</original>
    <variation>A</variation>
    <location>
        <position position="170"/>
    </location>
</feature>
<feature type="sequence variant" id="VAR_034173" description="In dbSNP:rs13235235.">
    <original>Y</original>
    <variation>H</variation>
    <location>
        <position position="278"/>
    </location>
</feature>
<gene>
    <name type="primary">OR2F2</name>
</gene>
<organism>
    <name type="scientific">Homo sapiens</name>
    <name type="common">Human</name>
    <dbReference type="NCBI Taxonomy" id="9606"/>
    <lineage>
        <taxon>Eukaryota</taxon>
        <taxon>Metazoa</taxon>
        <taxon>Chordata</taxon>
        <taxon>Craniata</taxon>
        <taxon>Vertebrata</taxon>
        <taxon>Euteleostomi</taxon>
        <taxon>Mammalia</taxon>
        <taxon>Eutheria</taxon>
        <taxon>Euarchontoglires</taxon>
        <taxon>Primates</taxon>
        <taxon>Haplorrhini</taxon>
        <taxon>Catarrhini</taxon>
        <taxon>Hominidae</taxon>
        <taxon>Homo</taxon>
    </lineage>
</organism>
<accession>O95006</accession>
<accession>A4D2G0</accession>
<accession>Q6IFP8</accession>
<protein>
    <recommendedName>
        <fullName>Olfactory receptor 2F2</fullName>
    </recommendedName>
    <alternativeName>
        <fullName>Olfactory receptor 7-1</fullName>
        <shortName>OR7-1</shortName>
    </alternativeName>
    <alternativeName>
        <fullName>Olfactory receptor OR7-6</fullName>
    </alternativeName>
</protein>
<proteinExistence type="evidence at transcript level"/>
<sequence>MEIDNQTWVREFILLGLSSDWCTQISLFSLFLVTYLMTVLGNCLIVLLIRLDSRLHTPMYFFLTNLSLVDVSYATSVVPQLLAHFLAEHKAIPFQSCAAQLFFSLALGGIEFVLLAVMAYDRHVAVSDRLRYSAIMHGGLCARLAITSWVSGSINSLVQTAITFQLPMCTNKFIDHISCELLAVVRLACVDTSSNEAAIMVSSIVLLMTPFCLVLLSYIRIISTILKIQSREGRKKAFHTCASHLTVVALCYGTTIFTYIQPHSGPSVLQEKLISVFYAIVMPLLNPVIYSLRNKEVKGAWHKLLEKFSGLTSKLGT</sequence>